<comment type="subunit">
    <text evidence="3">Unlike WDR5A, does not interact with RBL or TRO.</text>
</comment>
<comment type="disruption phenotype">
    <text evidence="2">No visible phenotype.</text>
</comment>
<proteinExistence type="evidence at protein level"/>
<feature type="chain" id="PRO_0000431783" description="COMPASS-like H3K4 histone methylase component WDR5B">
    <location>
        <begin position="1"/>
        <end position="333"/>
    </location>
</feature>
<feature type="repeat" description="WD 1" evidence="1">
    <location>
        <begin position="1"/>
        <end position="40"/>
    </location>
</feature>
<feature type="repeat" description="WD 2" evidence="1">
    <location>
        <begin position="41"/>
        <end position="80"/>
    </location>
</feature>
<feature type="repeat" description="WD 3" evidence="1">
    <location>
        <begin position="83"/>
        <end position="122"/>
    </location>
</feature>
<feature type="repeat" description="WD 4" evidence="1">
    <location>
        <begin position="126"/>
        <end position="167"/>
    </location>
</feature>
<feature type="repeat" description="WD 5" evidence="1">
    <location>
        <begin position="169"/>
        <end position="207"/>
    </location>
</feature>
<feature type="repeat" description="WD 6" evidence="1">
    <location>
        <begin position="211"/>
        <end position="252"/>
    </location>
</feature>
<feature type="repeat" description="WD 7" evidence="1">
    <location>
        <begin position="253"/>
        <end position="295"/>
    </location>
</feature>
<feature type="repeat" description="WD 8" evidence="1">
    <location>
        <begin position="298"/>
        <end position="333"/>
    </location>
</feature>
<evidence type="ECO:0000255" key="1"/>
<evidence type="ECO:0000269" key="2">
    <source>
    </source>
</evidence>
<evidence type="ECO:0000269" key="3">
    <source>
    </source>
</evidence>
<evidence type="ECO:0000303" key="4">
    <source>
    </source>
</evidence>
<evidence type="ECO:0000312" key="5">
    <source>
        <dbReference type="Araport" id="AT4G02730"/>
    </source>
</evidence>
<evidence type="ECO:0000312" key="6">
    <source>
        <dbReference type="EMBL" id="AAD15347.1"/>
    </source>
</evidence>
<evidence type="ECO:0000312" key="7">
    <source>
        <dbReference type="Proteomes" id="UP000006548"/>
    </source>
</evidence>
<keyword id="KW-1185">Reference proteome</keyword>
<keyword id="KW-0677">Repeat</keyword>
<keyword id="KW-0853">WD repeat</keyword>
<organism evidence="7">
    <name type="scientific">Arabidopsis thaliana</name>
    <name type="common">Mouse-ear cress</name>
    <dbReference type="NCBI Taxonomy" id="3702"/>
    <lineage>
        <taxon>Eukaryota</taxon>
        <taxon>Viridiplantae</taxon>
        <taxon>Streptophyta</taxon>
        <taxon>Embryophyta</taxon>
        <taxon>Tracheophyta</taxon>
        <taxon>Spermatophyta</taxon>
        <taxon>Magnoliopsida</taxon>
        <taxon>eudicotyledons</taxon>
        <taxon>Gunneridae</taxon>
        <taxon>Pentapetalae</taxon>
        <taxon>rosids</taxon>
        <taxon>malvids</taxon>
        <taxon>Brassicales</taxon>
        <taxon>Brassicaceae</taxon>
        <taxon>Camelineae</taxon>
        <taxon>Arabidopsis</taxon>
    </lineage>
</organism>
<accession>Q9SY00</accession>
<gene>
    <name evidence="4" type="primary">WDR5B</name>
    <name evidence="5" type="ordered locus">At4g02730</name>
    <name evidence="6" type="ORF">T5J8.2</name>
</gene>
<dbReference type="EMBL" id="AC004044">
    <property type="protein sequence ID" value="AAD15347.1"/>
    <property type="molecule type" value="Genomic_DNA"/>
</dbReference>
<dbReference type="EMBL" id="AL161495">
    <property type="protein sequence ID" value="CAB77758.1"/>
    <property type="molecule type" value="Genomic_DNA"/>
</dbReference>
<dbReference type="EMBL" id="CP002687">
    <property type="protein sequence ID" value="AEE82221.1"/>
    <property type="molecule type" value="Genomic_DNA"/>
</dbReference>
<dbReference type="EMBL" id="AF439825">
    <property type="protein sequence ID" value="AAL27497.1"/>
    <property type="molecule type" value="mRNA"/>
</dbReference>
<dbReference type="EMBL" id="AY088121">
    <property type="protein sequence ID" value="AAM65666.1"/>
    <property type="molecule type" value="mRNA"/>
</dbReference>
<dbReference type="EMBL" id="AY125558">
    <property type="protein sequence ID" value="AAM78068.1"/>
    <property type="molecule type" value="mRNA"/>
</dbReference>
<dbReference type="PIR" id="G85034">
    <property type="entry name" value="G85034"/>
</dbReference>
<dbReference type="RefSeq" id="NP_192182.1">
    <property type="nucleotide sequence ID" value="NM_116507.3"/>
</dbReference>
<dbReference type="SMR" id="Q9SY00"/>
<dbReference type="FunCoup" id="Q9SY00">
    <property type="interactions" value="3535"/>
</dbReference>
<dbReference type="STRING" id="3702.Q9SY00"/>
<dbReference type="PaxDb" id="3702-AT4G02730.1"/>
<dbReference type="ProteomicsDB" id="242574"/>
<dbReference type="EnsemblPlants" id="AT4G02730.1">
    <property type="protein sequence ID" value="AT4G02730.1"/>
    <property type="gene ID" value="AT4G02730"/>
</dbReference>
<dbReference type="GeneID" id="828189"/>
<dbReference type="Gramene" id="AT4G02730.1">
    <property type="protein sequence ID" value="AT4G02730.1"/>
    <property type="gene ID" value="AT4G02730"/>
</dbReference>
<dbReference type="KEGG" id="ath:AT4G02730"/>
<dbReference type="Araport" id="AT4G02730"/>
<dbReference type="TAIR" id="AT4G02730">
    <property type="gene designation" value="WDR5B"/>
</dbReference>
<dbReference type="eggNOG" id="KOG0266">
    <property type="taxonomic scope" value="Eukaryota"/>
</dbReference>
<dbReference type="HOGENOM" id="CLU_000288_57_1_1"/>
<dbReference type="InParanoid" id="Q9SY00"/>
<dbReference type="OMA" id="NYALKCT"/>
<dbReference type="PhylomeDB" id="Q9SY00"/>
<dbReference type="PRO" id="PR:Q9SY00"/>
<dbReference type="Proteomes" id="UP000006548">
    <property type="component" value="Chromosome 4"/>
</dbReference>
<dbReference type="ExpressionAtlas" id="Q9SY00">
    <property type="expression patterns" value="baseline and differential"/>
</dbReference>
<dbReference type="GO" id="GO:0080008">
    <property type="term" value="C:Cul4-RING E3 ubiquitin ligase complex"/>
    <property type="evidence" value="ECO:0000250"/>
    <property type="project" value="TAIR"/>
</dbReference>
<dbReference type="CDD" id="cd00200">
    <property type="entry name" value="WD40"/>
    <property type="match status" value="1"/>
</dbReference>
<dbReference type="FunFam" id="2.130.10.10:FF:000228">
    <property type="entry name" value="COMPASS-like H3K4 histone methylase component WDR5A"/>
    <property type="match status" value="1"/>
</dbReference>
<dbReference type="Gene3D" id="2.130.10.10">
    <property type="entry name" value="YVTN repeat-like/Quinoprotein amine dehydrogenase"/>
    <property type="match status" value="1"/>
</dbReference>
<dbReference type="InterPro" id="IPR020472">
    <property type="entry name" value="G-protein_beta_WD-40_rep"/>
</dbReference>
<dbReference type="InterPro" id="IPR015943">
    <property type="entry name" value="WD40/YVTN_repeat-like_dom_sf"/>
</dbReference>
<dbReference type="InterPro" id="IPR019775">
    <property type="entry name" value="WD40_repeat_CS"/>
</dbReference>
<dbReference type="InterPro" id="IPR036322">
    <property type="entry name" value="WD40_repeat_dom_sf"/>
</dbReference>
<dbReference type="InterPro" id="IPR001680">
    <property type="entry name" value="WD40_rpt"/>
</dbReference>
<dbReference type="InterPro" id="IPR050349">
    <property type="entry name" value="WD_LIS1/nudF_dynein_reg"/>
</dbReference>
<dbReference type="PANTHER" id="PTHR44129">
    <property type="entry name" value="WD REPEAT-CONTAINING PROTEIN POP1"/>
    <property type="match status" value="1"/>
</dbReference>
<dbReference type="Pfam" id="PF25175">
    <property type="entry name" value="Beta-prop_WDR5"/>
    <property type="match status" value="1"/>
</dbReference>
<dbReference type="PIRSF" id="PIRSF002394">
    <property type="entry name" value="GN-bd_beta"/>
    <property type="match status" value="1"/>
</dbReference>
<dbReference type="PRINTS" id="PR00320">
    <property type="entry name" value="GPROTEINBRPT"/>
</dbReference>
<dbReference type="SMART" id="SM00320">
    <property type="entry name" value="WD40"/>
    <property type="match status" value="7"/>
</dbReference>
<dbReference type="SUPFAM" id="SSF50978">
    <property type="entry name" value="WD40 repeat-like"/>
    <property type="match status" value="1"/>
</dbReference>
<dbReference type="PROSITE" id="PS00678">
    <property type="entry name" value="WD_REPEATS_1"/>
    <property type="match status" value="4"/>
</dbReference>
<dbReference type="PROSITE" id="PS50082">
    <property type="entry name" value="WD_REPEATS_2"/>
    <property type="match status" value="5"/>
</dbReference>
<dbReference type="PROSITE" id="PS50294">
    <property type="entry name" value="WD_REPEATS_REGION"/>
    <property type="match status" value="1"/>
</dbReference>
<sequence length="333" mass="36303">MPSGGNGTSNGVANANSTGNAGTSGNVPIYKPYRHLKTLEGHTAAISCVKFSNDGNLLASASVDKTMILWSATNYSLIHRYEGHSSGISDLAWSSDSHYTCSASDDCTLRIWDARSPYECLKVLRGHTNFVFCVNFNPPSNLIVSGSFDETIRIWEVKTGKCVRMIKAHSMPISSVHFNRDGSLIVSASHDGSCKIWDAKEGTCLKTLIDDKSPAVSFAKFSPNGKFILVATLDSTLKLSNYATGKFLKVYTGHTNKVFCITSAFSVTNGKYIVSGSEDNCVYLWDLQARNILQRLEGHTDAVISVSCHPVQNEISSSGNHLDKTIRIWKQDA</sequence>
<protein>
    <recommendedName>
        <fullName evidence="4">COMPASS-like H3K4 histone methylase component WDR5B</fullName>
        <shortName evidence="4">AtWDR5B</shortName>
    </recommendedName>
</protein>
<reference key="1">
    <citation type="journal article" date="1999" name="Nature">
        <title>Sequence and analysis of chromosome 4 of the plant Arabidopsis thaliana.</title>
        <authorList>
            <person name="Mayer K.F.X."/>
            <person name="Schueller C."/>
            <person name="Wambutt R."/>
            <person name="Murphy G."/>
            <person name="Volckaert G."/>
            <person name="Pohl T."/>
            <person name="Duesterhoeft A."/>
            <person name="Stiekema W."/>
            <person name="Entian K.-D."/>
            <person name="Terryn N."/>
            <person name="Harris B."/>
            <person name="Ansorge W."/>
            <person name="Brandt P."/>
            <person name="Grivell L.A."/>
            <person name="Rieger M."/>
            <person name="Weichselgartner M."/>
            <person name="de Simone V."/>
            <person name="Obermaier B."/>
            <person name="Mache R."/>
            <person name="Mueller M."/>
            <person name="Kreis M."/>
            <person name="Delseny M."/>
            <person name="Puigdomenech P."/>
            <person name="Watson M."/>
            <person name="Schmidtheini T."/>
            <person name="Reichert B."/>
            <person name="Portetelle D."/>
            <person name="Perez-Alonso M."/>
            <person name="Boutry M."/>
            <person name="Bancroft I."/>
            <person name="Vos P."/>
            <person name="Hoheisel J."/>
            <person name="Zimmermann W."/>
            <person name="Wedler H."/>
            <person name="Ridley P."/>
            <person name="Langham S.-A."/>
            <person name="McCullagh B."/>
            <person name="Bilham L."/>
            <person name="Robben J."/>
            <person name="van der Schueren J."/>
            <person name="Grymonprez B."/>
            <person name="Chuang Y.-J."/>
            <person name="Vandenbussche F."/>
            <person name="Braeken M."/>
            <person name="Weltjens I."/>
            <person name="Voet M."/>
            <person name="Bastiaens I."/>
            <person name="Aert R."/>
            <person name="Defoor E."/>
            <person name="Weitzenegger T."/>
            <person name="Bothe G."/>
            <person name="Ramsperger U."/>
            <person name="Hilbert H."/>
            <person name="Braun M."/>
            <person name="Holzer E."/>
            <person name="Brandt A."/>
            <person name="Peters S."/>
            <person name="van Staveren M."/>
            <person name="Dirkse W."/>
            <person name="Mooijman P."/>
            <person name="Klein Lankhorst R."/>
            <person name="Rose M."/>
            <person name="Hauf J."/>
            <person name="Koetter P."/>
            <person name="Berneiser S."/>
            <person name="Hempel S."/>
            <person name="Feldpausch M."/>
            <person name="Lamberth S."/>
            <person name="Van den Daele H."/>
            <person name="De Keyser A."/>
            <person name="Buysshaert C."/>
            <person name="Gielen J."/>
            <person name="Villarroel R."/>
            <person name="De Clercq R."/>
            <person name="van Montagu M."/>
            <person name="Rogers J."/>
            <person name="Cronin A."/>
            <person name="Quail M.A."/>
            <person name="Bray-Allen S."/>
            <person name="Clark L."/>
            <person name="Doggett J."/>
            <person name="Hall S."/>
            <person name="Kay M."/>
            <person name="Lennard N."/>
            <person name="McLay K."/>
            <person name="Mayes R."/>
            <person name="Pettett A."/>
            <person name="Rajandream M.A."/>
            <person name="Lyne M."/>
            <person name="Benes V."/>
            <person name="Rechmann S."/>
            <person name="Borkova D."/>
            <person name="Bloecker H."/>
            <person name="Scharfe M."/>
            <person name="Grimm M."/>
            <person name="Loehnert T.-H."/>
            <person name="Dose S."/>
            <person name="de Haan M."/>
            <person name="Maarse A.C."/>
            <person name="Schaefer M."/>
            <person name="Mueller-Auer S."/>
            <person name="Gabel C."/>
            <person name="Fuchs M."/>
            <person name="Fartmann B."/>
            <person name="Granderath K."/>
            <person name="Dauner D."/>
            <person name="Herzl A."/>
            <person name="Neumann S."/>
            <person name="Argiriou A."/>
            <person name="Vitale D."/>
            <person name="Liguori R."/>
            <person name="Piravandi E."/>
            <person name="Massenet O."/>
            <person name="Quigley F."/>
            <person name="Clabauld G."/>
            <person name="Muendlein A."/>
            <person name="Felber R."/>
            <person name="Schnabl S."/>
            <person name="Hiller R."/>
            <person name="Schmidt W."/>
            <person name="Lecharny A."/>
            <person name="Aubourg S."/>
            <person name="Chefdor F."/>
            <person name="Cooke R."/>
            <person name="Berger C."/>
            <person name="Monfort A."/>
            <person name="Casacuberta E."/>
            <person name="Gibbons T."/>
            <person name="Weber N."/>
            <person name="Vandenbol M."/>
            <person name="Bargues M."/>
            <person name="Terol J."/>
            <person name="Torres A."/>
            <person name="Perez-Perez A."/>
            <person name="Purnelle B."/>
            <person name="Bent E."/>
            <person name="Johnson S."/>
            <person name="Tacon D."/>
            <person name="Jesse T."/>
            <person name="Heijnen L."/>
            <person name="Schwarz S."/>
            <person name="Scholler P."/>
            <person name="Heber S."/>
            <person name="Francs P."/>
            <person name="Bielke C."/>
            <person name="Frishman D."/>
            <person name="Haase D."/>
            <person name="Lemcke K."/>
            <person name="Mewes H.-W."/>
            <person name="Stocker S."/>
            <person name="Zaccaria P."/>
            <person name="Bevan M."/>
            <person name="Wilson R.K."/>
            <person name="de la Bastide M."/>
            <person name="Habermann K."/>
            <person name="Parnell L."/>
            <person name="Dedhia N."/>
            <person name="Gnoj L."/>
            <person name="Schutz K."/>
            <person name="Huang E."/>
            <person name="Spiegel L."/>
            <person name="Sekhon M."/>
            <person name="Murray J."/>
            <person name="Sheet P."/>
            <person name="Cordes M."/>
            <person name="Abu-Threideh J."/>
            <person name="Stoneking T."/>
            <person name="Kalicki J."/>
            <person name="Graves T."/>
            <person name="Harmon G."/>
            <person name="Edwards J."/>
            <person name="Latreille P."/>
            <person name="Courtney L."/>
            <person name="Cloud J."/>
            <person name="Abbott A."/>
            <person name="Scott K."/>
            <person name="Johnson D."/>
            <person name="Minx P."/>
            <person name="Bentley D."/>
            <person name="Fulton B."/>
            <person name="Miller N."/>
            <person name="Greco T."/>
            <person name="Kemp K."/>
            <person name="Kramer J."/>
            <person name="Fulton L."/>
            <person name="Mardis E."/>
            <person name="Dante M."/>
            <person name="Pepin K."/>
            <person name="Hillier L.W."/>
            <person name="Nelson J."/>
            <person name="Spieth J."/>
            <person name="Ryan E."/>
            <person name="Andrews S."/>
            <person name="Geisel C."/>
            <person name="Layman D."/>
            <person name="Du H."/>
            <person name="Ali J."/>
            <person name="Berghoff A."/>
            <person name="Jones K."/>
            <person name="Drone K."/>
            <person name="Cotton M."/>
            <person name="Joshu C."/>
            <person name="Antonoiu B."/>
            <person name="Zidanic M."/>
            <person name="Strong C."/>
            <person name="Sun H."/>
            <person name="Lamar B."/>
            <person name="Yordan C."/>
            <person name="Ma P."/>
            <person name="Zhong J."/>
            <person name="Preston R."/>
            <person name="Vil D."/>
            <person name="Shekher M."/>
            <person name="Matero A."/>
            <person name="Shah R."/>
            <person name="Swaby I.K."/>
            <person name="O'Shaughnessy A."/>
            <person name="Rodriguez M."/>
            <person name="Hoffman J."/>
            <person name="Till S."/>
            <person name="Granat S."/>
            <person name="Shohdy N."/>
            <person name="Hasegawa A."/>
            <person name="Hameed A."/>
            <person name="Lodhi M."/>
            <person name="Johnson A."/>
            <person name="Chen E."/>
            <person name="Marra M.A."/>
            <person name="Martienssen R."/>
            <person name="McCombie W.R."/>
        </authorList>
    </citation>
    <scope>NUCLEOTIDE SEQUENCE [LARGE SCALE GENOMIC DNA]</scope>
    <source>
        <strain>cv. Columbia</strain>
    </source>
</reference>
<reference key="2">
    <citation type="journal article" date="2017" name="Plant J.">
        <title>Araport11: a complete reannotation of the Arabidopsis thaliana reference genome.</title>
        <authorList>
            <person name="Cheng C.Y."/>
            <person name="Krishnakumar V."/>
            <person name="Chan A.P."/>
            <person name="Thibaud-Nissen F."/>
            <person name="Schobel S."/>
            <person name="Town C.D."/>
        </authorList>
    </citation>
    <scope>GENOME REANNOTATION</scope>
    <source>
        <strain>cv. Columbia</strain>
    </source>
</reference>
<reference key="3">
    <citation type="journal article" date="2003" name="Science">
        <title>Empirical analysis of transcriptional activity in the Arabidopsis genome.</title>
        <authorList>
            <person name="Yamada K."/>
            <person name="Lim J."/>
            <person name="Dale J.M."/>
            <person name="Chen H."/>
            <person name="Shinn P."/>
            <person name="Palm C.J."/>
            <person name="Southwick A.M."/>
            <person name="Wu H.C."/>
            <person name="Kim C.J."/>
            <person name="Nguyen M."/>
            <person name="Pham P.K."/>
            <person name="Cheuk R.F."/>
            <person name="Karlin-Newmann G."/>
            <person name="Liu S.X."/>
            <person name="Lam B."/>
            <person name="Sakano H."/>
            <person name="Wu T."/>
            <person name="Yu G."/>
            <person name="Miranda M."/>
            <person name="Quach H.L."/>
            <person name="Tripp M."/>
            <person name="Chang C.H."/>
            <person name="Lee J.M."/>
            <person name="Toriumi M.J."/>
            <person name="Chan M.M."/>
            <person name="Tang C.C."/>
            <person name="Onodera C.S."/>
            <person name="Deng J.M."/>
            <person name="Akiyama K."/>
            <person name="Ansari Y."/>
            <person name="Arakawa T."/>
            <person name="Banh J."/>
            <person name="Banno F."/>
            <person name="Bowser L."/>
            <person name="Brooks S.Y."/>
            <person name="Carninci P."/>
            <person name="Chao Q."/>
            <person name="Choy N."/>
            <person name="Enju A."/>
            <person name="Goldsmith A.D."/>
            <person name="Gurjal M."/>
            <person name="Hansen N.F."/>
            <person name="Hayashizaki Y."/>
            <person name="Johnson-Hopson C."/>
            <person name="Hsuan V.W."/>
            <person name="Iida K."/>
            <person name="Karnes M."/>
            <person name="Khan S."/>
            <person name="Koesema E."/>
            <person name="Ishida J."/>
            <person name="Jiang P.X."/>
            <person name="Jones T."/>
            <person name="Kawai J."/>
            <person name="Kamiya A."/>
            <person name="Meyers C."/>
            <person name="Nakajima M."/>
            <person name="Narusaka M."/>
            <person name="Seki M."/>
            <person name="Sakurai T."/>
            <person name="Satou M."/>
            <person name="Tamse R."/>
            <person name="Vaysberg M."/>
            <person name="Wallender E.K."/>
            <person name="Wong C."/>
            <person name="Yamamura Y."/>
            <person name="Yuan S."/>
            <person name="Shinozaki K."/>
            <person name="Davis R.W."/>
            <person name="Theologis A."/>
            <person name="Ecker J.R."/>
        </authorList>
    </citation>
    <scope>NUCLEOTIDE SEQUENCE [LARGE SCALE MRNA]</scope>
    <source>
        <strain>cv. Columbia</strain>
    </source>
</reference>
<reference key="4">
    <citation type="submission" date="2002-03" db="EMBL/GenBank/DDBJ databases">
        <title>Full-length cDNA from Arabidopsis thaliana.</title>
        <authorList>
            <person name="Brover V.V."/>
            <person name="Troukhan M.E."/>
            <person name="Alexandrov N.A."/>
            <person name="Lu Y.-P."/>
            <person name="Flavell R.B."/>
            <person name="Feldmann K.A."/>
        </authorList>
    </citation>
    <scope>NUCLEOTIDE SEQUENCE [LARGE SCALE MRNA]</scope>
</reference>
<reference key="5">
    <citation type="journal article" date="2009" name="Plant Cell">
        <title>Establishment of the winter-annual growth habit via FRIGIDA-mediated histone methylation at FLOWERING LOCUS C in Arabidopsis.</title>
        <authorList>
            <person name="Jiang D."/>
            <person name="Gu X."/>
            <person name="He Y."/>
        </authorList>
    </citation>
    <scope>DISRUPTION PHENOTYPE</scope>
</reference>
<reference key="6">
    <citation type="journal article" date="2011" name="PLoS Genet.">
        <title>Arabidopsis COMPASS-like complexes mediate histone H3 lysine-4 trimethylation to control floral transition and plant development.</title>
        <authorList>
            <person name="Jiang D."/>
            <person name="Kong N.C."/>
            <person name="Gu X."/>
            <person name="Li Z."/>
            <person name="He Y."/>
        </authorList>
    </citation>
    <scope>LACK OF INTERACTION WITH RBL AND TRO</scope>
</reference>
<name>WDR5B_ARATH</name>